<organism>
    <name type="scientific">Glycine max</name>
    <name type="common">Soybean</name>
    <name type="synonym">Glycine hispida</name>
    <dbReference type="NCBI Taxonomy" id="3847"/>
    <lineage>
        <taxon>Eukaryota</taxon>
        <taxon>Viridiplantae</taxon>
        <taxon>Streptophyta</taxon>
        <taxon>Embryophyta</taxon>
        <taxon>Tracheophyta</taxon>
        <taxon>Spermatophyta</taxon>
        <taxon>Magnoliopsida</taxon>
        <taxon>eudicotyledons</taxon>
        <taxon>Gunneridae</taxon>
        <taxon>Pentapetalae</taxon>
        <taxon>rosids</taxon>
        <taxon>fabids</taxon>
        <taxon>Fabales</taxon>
        <taxon>Fabaceae</taxon>
        <taxon>Papilionoideae</taxon>
        <taxon>50 kb inversion clade</taxon>
        <taxon>NPAAA clade</taxon>
        <taxon>indigoferoid/millettioid clade</taxon>
        <taxon>Phaseoleae</taxon>
        <taxon>Glycine</taxon>
        <taxon>Glycine subgen. Soja</taxon>
    </lineage>
</organism>
<proteinExistence type="evidence at protein level"/>
<keyword id="KW-1015">Disulfide bond</keyword>
<keyword id="KW-0249">Electron transport</keyword>
<keyword id="KW-0408">Iron</keyword>
<keyword id="KW-0472">Membrane</keyword>
<keyword id="KW-0479">Metal-binding</keyword>
<keyword id="KW-0496">Mitochondrion</keyword>
<keyword id="KW-0999">Mitochondrion inner membrane</keyword>
<keyword id="KW-0560">Oxidoreductase</keyword>
<keyword id="KW-1185">Reference proteome</keyword>
<keyword id="KW-0679">Respiratory chain</keyword>
<keyword id="KW-0809">Transit peptide</keyword>
<keyword id="KW-0812">Transmembrane</keyword>
<keyword id="KW-1133">Transmembrane helix</keyword>
<keyword id="KW-0813">Transport</keyword>
<comment type="function">
    <text evidence="4 5">Catalyzes the cyanide-resistant oxidation of ubiquinol and the reduction of molecular oxygen to water, but does not translocate protons and consequently is not linked to oxidative phosphorylation. May increase respiration when the cytochrome respiratory pathway is restricted, or in response to low temperatures.</text>
</comment>
<comment type="catalytic activity">
    <reaction evidence="4">
        <text>2 a ubiquinol + O2 = 2 a ubiquinone + 2 H2O</text>
        <dbReference type="Rhea" id="RHEA:30255"/>
        <dbReference type="Rhea" id="RHEA-COMP:9565"/>
        <dbReference type="Rhea" id="RHEA-COMP:9566"/>
        <dbReference type="ChEBI" id="CHEBI:15377"/>
        <dbReference type="ChEBI" id="CHEBI:15379"/>
        <dbReference type="ChEBI" id="CHEBI:16389"/>
        <dbReference type="ChEBI" id="CHEBI:17976"/>
        <dbReference type="EC" id="1.10.3.11"/>
    </reaction>
</comment>
<comment type="cofactor">
    <cofactor evidence="6">
        <name>Fe cation</name>
        <dbReference type="ChEBI" id="CHEBI:24875"/>
    </cofactor>
    <text evidence="6">Binds 2 iron ions per subunit.</text>
</comment>
<comment type="activity regulation">
    <text evidence="4 5">When the two monomeric subunits are covalently linked by a S-S bond, the enzyme is essentially inactive. When the disulfide bond is reduced, its component sulfhydryls can associate with K-keto acids through formation of a thiohemiacetal, resulting in enzyme activation. Pyruvate increases Vmax, but not the substrate affinity.</text>
</comment>
<comment type="biophysicochemical properties">
    <kinetics>
        <KM evidence="4">115.3 uM for O(2) (in the presence of 0.025% N,N',N'-polyoxyethylene(l0)-N-tallow-1,3- diamino-propane)</KM>
        <Vmax evidence="4">32.3 umol/min/mg enzyme with O(2) as substrate</Vmax>
    </kinetics>
    <phDependence>
        <text evidence="4">Optimum pH is 7.0-7.5.</text>
    </phDependence>
</comment>
<comment type="subunit">
    <text evidence="5">Homodimer; disulfide-linked.</text>
</comment>
<comment type="interaction">
    <interactant intactId="EBI-2123914">
        <id>Q07185</id>
    </interactant>
    <interactant intactId="EBI-2123898">
        <id>O64471</id>
        <label>MTX1</label>
    </interactant>
    <organismsDiffer>true</organismsDiffer>
    <experiments>3</experiments>
</comment>
<comment type="interaction">
    <interactant intactId="EBI-2123914">
        <id>Q07185</id>
    </interactant>
    <interactant intactId="EBI-2124066">
        <id>F4KCL7</id>
        <label>OM64</label>
    </interactant>
    <organismsDiffer>true</organismsDiffer>
    <experiments>2</experiments>
</comment>
<comment type="interaction">
    <interactant intactId="EBI-2123914">
        <id>Q07185</id>
    </interactant>
    <interactant intactId="EBI-2351908">
        <id>P82805</id>
        <label>TOM20-4</label>
    </interactant>
    <organismsDiffer>true</organismsDiffer>
    <experiments>2</experiments>
</comment>
<comment type="subcellular location">
    <subcellularLocation>
        <location evidence="7">Mitochondrion inner membrane</location>
        <topology evidence="7">Multi-pass membrane protein</topology>
    </subcellularLocation>
    <text>Mitochondrial, possibly in the inner surface of the inner mitochondrial membrane.</text>
</comment>
<comment type="induction">
    <text>By salicylic acid.</text>
</comment>
<comment type="similarity">
    <text evidence="7">Belongs to the alternative oxidase family.</text>
</comment>
<name>AOX1_SOYBN</name>
<sequence>MMMMMSRSGANRVANTAMFVAKGLSGEVGGLRALYGGGVRSESTLALSEKEKIEKKVGLSSAGGNKEEKVIVSYWGIQPSKITKKDGTEWKWNCFSPWGTYKADLSIDLEKHMPPTTFLDKMAFWTVKVLRYPTDVFFQRRYGCRAMMLETVAAVPGMVAGMLLHCKSLRRFEHSGGWFKALLEEAENERMHLMTFMEVAKPKWYERALVITVQGVFFNAYFLGYLLSPKFAHRMFGYLEEEAIHSYTEFLKELDKGNIENVPAPAIAIDYWQLPPGSTLRDVVMVVRADEAHHRDVNHFASDIHYQGRELREAAAPIGYH</sequence>
<gene>
    <name type="primary">AOX1</name>
</gene>
<accession>Q07185</accession>
<accession>Q41265</accession>
<feature type="transit peptide" description="Mitochondrion" evidence="3">
    <location>
        <begin position="1"/>
        <end position="41"/>
    </location>
</feature>
<feature type="chain" id="PRO_0000001737" description="Ubiquinol oxidase 1, mitochondrial">
    <location>
        <begin position="42"/>
        <end position="321"/>
    </location>
</feature>
<feature type="transmembrane region" description="Helical" evidence="3">
    <location>
        <begin position="146"/>
        <end position="166"/>
    </location>
</feature>
<feature type="transmembrane region" description="Helical" evidence="3">
    <location>
        <begin position="208"/>
        <end position="228"/>
    </location>
</feature>
<feature type="binding site" evidence="1">
    <location>
        <position position="150"/>
    </location>
    <ligand>
        <name>Fe cation</name>
        <dbReference type="ChEBI" id="CHEBI:24875"/>
        <label>1</label>
    </ligand>
</feature>
<feature type="binding site" evidence="1">
    <location>
        <position position="189"/>
    </location>
    <ligand>
        <name>Fe cation</name>
        <dbReference type="ChEBI" id="CHEBI:24875"/>
        <label>1</label>
    </ligand>
</feature>
<feature type="binding site" evidence="1">
    <location>
        <position position="189"/>
    </location>
    <ligand>
        <name>Fe cation</name>
        <dbReference type="ChEBI" id="CHEBI:24875"/>
        <label>2</label>
    </ligand>
</feature>
<feature type="binding site" evidence="1">
    <location>
        <position position="192"/>
    </location>
    <ligand>
        <name>Fe cation</name>
        <dbReference type="ChEBI" id="CHEBI:24875"/>
        <label>1</label>
    </ligand>
</feature>
<feature type="binding site" evidence="1">
    <location>
        <position position="240"/>
    </location>
    <ligand>
        <name>Fe cation</name>
        <dbReference type="ChEBI" id="CHEBI:24875"/>
        <label>2</label>
    </ligand>
</feature>
<feature type="binding site" evidence="1">
    <location>
        <position position="291"/>
    </location>
    <ligand>
        <name>Fe cation</name>
        <dbReference type="ChEBI" id="CHEBI:24875"/>
        <label>1</label>
    </ligand>
</feature>
<feature type="binding site" evidence="1">
    <location>
        <position position="291"/>
    </location>
    <ligand>
        <name>Fe cation</name>
        <dbReference type="ChEBI" id="CHEBI:24875"/>
        <label>2</label>
    </ligand>
</feature>
<feature type="binding site" evidence="1">
    <location>
        <position position="294"/>
    </location>
    <ligand>
        <name>Fe cation</name>
        <dbReference type="ChEBI" id="CHEBI:24875"/>
        <label>2</label>
    </ligand>
</feature>
<feature type="disulfide bond" description="Interchain" evidence="2">
    <location>
        <position position="94"/>
    </location>
</feature>
<protein>
    <recommendedName>
        <fullName>Ubiquinol oxidase 1, mitochondrial</fullName>
        <ecNumber>1.10.3.11</ecNumber>
    </recommendedName>
    <alternativeName>
        <fullName>Alternative oxidase 1</fullName>
    </alternativeName>
</protein>
<evidence type="ECO:0000250" key="1">
    <source>
        <dbReference type="UniProtKB" id="Q26710"/>
    </source>
</evidence>
<evidence type="ECO:0000250" key="2">
    <source>
        <dbReference type="UniProtKB" id="Q41224"/>
    </source>
</evidence>
<evidence type="ECO:0000255" key="3"/>
<evidence type="ECO:0000269" key="4">
    <source>
    </source>
</evidence>
<evidence type="ECO:0000269" key="5">
    <source>
    </source>
</evidence>
<evidence type="ECO:0000269" key="6">
    <source>
    </source>
</evidence>
<evidence type="ECO:0000305" key="7"/>
<reference key="1">
    <citation type="journal article" date="1993" name="Plant Physiol.">
        <title>Sequencing of a soybean alternative oxidase cDNA clone.</title>
        <authorList>
            <person name="Whelan J.M."/>
            <person name="McIntosh L."/>
            <person name="Day D.A."/>
        </authorList>
    </citation>
    <scope>NUCLEOTIDE SEQUENCE [MRNA]</scope>
    <source>
        <tissue>Shoot</tissue>
    </source>
</reference>
<reference key="2">
    <citation type="journal article" date="1996" name="Planta">
        <title>The alternative oxidase is encoded in a multigene family in soybean.</title>
        <authorList>
            <person name="Whelan J."/>
            <person name="Millar A.H."/>
            <person name="Day D.A."/>
        </authorList>
    </citation>
    <scope>NUCLEOTIDE SEQUENCE [MRNA] OF 194-233</scope>
</reference>
<reference key="3">
    <citation type="journal article" date="1993" name="Plant Physiol.">
        <title>Covalent and noncovalent dimers of the cyanide-resistant alternative oxidase protein in higher plant mitochondria and their relationship to enzyme activity.</title>
        <authorList>
            <person name="Umbach A.L."/>
            <person name="Siedow J.N."/>
        </authorList>
    </citation>
    <scope>FUNCTION</scope>
    <scope>SUBUNIT</scope>
    <scope>ACTIVITY REGULATION</scope>
</reference>
<reference key="4">
    <citation type="journal article" date="1995" name="FEBS Lett.">
        <title>The active site of the cyanide-resistant oxidase from plant mitochondria contains a binuclear iron center.</title>
        <authorList>
            <person name="Siedow J.N."/>
            <person name="Umbach A.L."/>
            <person name="Moore A.L."/>
        </authorList>
    </citation>
    <scope>IRON-BINDING SITES</scope>
    <scope>COFACTOR</scope>
</reference>
<reference key="5">
    <citation type="journal article" date="1997" name="Plant Physiol.">
        <title>Substrate kinetics of the plant mitochondrial alternative oxidase and the effects of pyruvate.</title>
        <authorList>
            <person name="Hoefnagel M."/>
            <person name="Rich P.R."/>
            <person name="Zhang Q."/>
            <person name="Wiskich J.T."/>
        </authorList>
    </citation>
    <scope>FUNCTION</scope>
    <scope>CATALYTIC ACTIVITY</scope>
    <scope>ACTIVITY REGULATION</scope>
    <scope>BIOPHYSICOCHEMICAL PROPERTIES</scope>
</reference>
<reference key="6">
    <citation type="journal article" date="1999" name="FEBS Lett.">
        <title>A revised model of the active site of alternative oxidase.</title>
        <authorList>
            <person name="Andersson M.E."/>
            <person name="Nordlund P."/>
        </authorList>
    </citation>
    <scope>IRON-BINDING SITES</scope>
</reference>
<dbReference type="EC" id="1.10.3.11"/>
<dbReference type="EMBL" id="X68702">
    <property type="protein sequence ID" value="CAA48653.1"/>
    <property type="molecule type" value="mRNA"/>
</dbReference>
<dbReference type="EMBL" id="S81466">
    <property type="protein sequence ID" value="AAC34192.1"/>
    <property type="molecule type" value="mRNA"/>
</dbReference>
<dbReference type="RefSeq" id="NP_001236166.1">
    <property type="nucleotide sequence ID" value="NM_001249237.1"/>
</dbReference>
<dbReference type="SMR" id="Q07185"/>
<dbReference type="BioGRID" id="989647">
    <property type="interactions" value="5"/>
</dbReference>
<dbReference type="FunCoup" id="Q07185">
    <property type="interactions" value="301"/>
</dbReference>
<dbReference type="IntAct" id="Q07185">
    <property type="interactions" value="5"/>
</dbReference>
<dbReference type="STRING" id="3847.Q07185"/>
<dbReference type="PaxDb" id="3847-GLYMA04G14800.1"/>
<dbReference type="GeneID" id="547924"/>
<dbReference type="KEGG" id="gmx:547924"/>
<dbReference type="eggNOG" id="ENOG502QSB5">
    <property type="taxonomic scope" value="Eukaryota"/>
</dbReference>
<dbReference type="InParanoid" id="Q07185"/>
<dbReference type="OrthoDB" id="16906at2759"/>
<dbReference type="Proteomes" id="UP000008827">
    <property type="component" value="Unplaced"/>
</dbReference>
<dbReference type="GO" id="GO:0005743">
    <property type="term" value="C:mitochondrial inner membrane"/>
    <property type="evidence" value="ECO:0007669"/>
    <property type="project" value="UniProtKB-SubCell"/>
</dbReference>
<dbReference type="GO" id="GO:0005739">
    <property type="term" value="C:mitochondrion"/>
    <property type="evidence" value="ECO:0000318"/>
    <property type="project" value="GO_Central"/>
</dbReference>
<dbReference type="GO" id="GO:0009916">
    <property type="term" value="F:alternative oxidase activity"/>
    <property type="evidence" value="ECO:0000318"/>
    <property type="project" value="GO_Central"/>
</dbReference>
<dbReference type="GO" id="GO:0046872">
    <property type="term" value="F:metal ion binding"/>
    <property type="evidence" value="ECO:0007669"/>
    <property type="project" value="UniProtKB-KW"/>
</dbReference>
<dbReference type="GO" id="GO:0106292">
    <property type="term" value="F:superoxide-generating NADPH oxidase activity"/>
    <property type="evidence" value="ECO:0007669"/>
    <property type="project" value="UniProtKB-ARBA"/>
</dbReference>
<dbReference type="GO" id="GO:0102721">
    <property type="term" value="F:ubiquinol:oxygen oxidoreductase activity"/>
    <property type="evidence" value="ECO:0007669"/>
    <property type="project" value="UniProtKB-EC"/>
</dbReference>
<dbReference type="GO" id="GO:0010230">
    <property type="term" value="P:alternative respiration"/>
    <property type="evidence" value="ECO:0000318"/>
    <property type="project" value="GO_Central"/>
</dbReference>
<dbReference type="CDD" id="cd01053">
    <property type="entry name" value="AOX"/>
    <property type="match status" value="1"/>
</dbReference>
<dbReference type="FunFam" id="1.20.1260.140:FF:000001">
    <property type="entry name" value="Ubiquinol oxidase"/>
    <property type="match status" value="1"/>
</dbReference>
<dbReference type="Gene3D" id="1.20.1260.140">
    <property type="entry name" value="Alternative oxidase"/>
    <property type="match status" value="1"/>
</dbReference>
<dbReference type="InterPro" id="IPR002680">
    <property type="entry name" value="AOX"/>
</dbReference>
<dbReference type="InterPro" id="IPR038659">
    <property type="entry name" value="AOX_sf"/>
</dbReference>
<dbReference type="PANTHER" id="PTHR31803">
    <property type="entry name" value="ALTERNATIVE OXIDASE"/>
    <property type="match status" value="1"/>
</dbReference>
<dbReference type="PANTHER" id="PTHR31803:SF3">
    <property type="entry name" value="ALTERNATIVE OXIDASE"/>
    <property type="match status" value="1"/>
</dbReference>
<dbReference type="Pfam" id="PF01786">
    <property type="entry name" value="AOX"/>
    <property type="match status" value="1"/>
</dbReference>